<reference key="1">
    <citation type="journal article" date="2010" name="PLoS Genet.">
        <title>Genome sequence of the plant growth promoting endophytic bacterium Enterobacter sp. 638.</title>
        <authorList>
            <person name="Taghavi S."/>
            <person name="van der Lelie D."/>
            <person name="Hoffman A."/>
            <person name="Zhang Y.B."/>
            <person name="Walla M.D."/>
            <person name="Vangronsveld J."/>
            <person name="Newman L."/>
            <person name="Monchy S."/>
        </authorList>
    </citation>
    <scope>NUCLEOTIDE SEQUENCE [LARGE SCALE GENOMIC DNA]</scope>
    <source>
        <strain>638</strain>
    </source>
</reference>
<feature type="chain" id="PRO_1000060282" description="Nucleoside diphosphate kinase">
    <location>
        <begin position="1"/>
        <end position="143"/>
    </location>
</feature>
<feature type="active site" description="Pros-phosphohistidine intermediate" evidence="1">
    <location>
        <position position="117"/>
    </location>
</feature>
<feature type="binding site" evidence="1">
    <location>
        <position position="11"/>
    </location>
    <ligand>
        <name>ATP</name>
        <dbReference type="ChEBI" id="CHEBI:30616"/>
    </ligand>
</feature>
<feature type="binding site" evidence="1">
    <location>
        <position position="59"/>
    </location>
    <ligand>
        <name>ATP</name>
        <dbReference type="ChEBI" id="CHEBI:30616"/>
    </ligand>
</feature>
<feature type="binding site" evidence="1">
    <location>
        <position position="87"/>
    </location>
    <ligand>
        <name>ATP</name>
        <dbReference type="ChEBI" id="CHEBI:30616"/>
    </ligand>
</feature>
<feature type="binding site" evidence="1">
    <location>
        <position position="93"/>
    </location>
    <ligand>
        <name>ATP</name>
        <dbReference type="ChEBI" id="CHEBI:30616"/>
    </ligand>
</feature>
<feature type="binding site" evidence="1">
    <location>
        <position position="104"/>
    </location>
    <ligand>
        <name>ATP</name>
        <dbReference type="ChEBI" id="CHEBI:30616"/>
    </ligand>
</feature>
<feature type="binding site" evidence="1">
    <location>
        <position position="114"/>
    </location>
    <ligand>
        <name>ATP</name>
        <dbReference type="ChEBI" id="CHEBI:30616"/>
    </ligand>
</feature>
<sequence length="143" mass="15561">MTIERTFSIIKPNAVAKNVIGSIFARFESAGFKIVGTKMLHLTVEQARGFYAEHDGKPFFDGLVEFMTSGPIVVSVLESENAVQRHRDLLGATNPANALAGTLRADYADSFTENGTHGSDSVESAAREIAYFFAEGEVCPRTR</sequence>
<organism>
    <name type="scientific">Enterobacter sp. (strain 638)</name>
    <dbReference type="NCBI Taxonomy" id="399742"/>
    <lineage>
        <taxon>Bacteria</taxon>
        <taxon>Pseudomonadati</taxon>
        <taxon>Pseudomonadota</taxon>
        <taxon>Gammaproteobacteria</taxon>
        <taxon>Enterobacterales</taxon>
        <taxon>Enterobacteriaceae</taxon>
        <taxon>Enterobacter</taxon>
    </lineage>
</organism>
<keyword id="KW-0067">ATP-binding</keyword>
<keyword id="KW-0963">Cytoplasm</keyword>
<keyword id="KW-0418">Kinase</keyword>
<keyword id="KW-0460">Magnesium</keyword>
<keyword id="KW-0479">Metal-binding</keyword>
<keyword id="KW-0546">Nucleotide metabolism</keyword>
<keyword id="KW-0547">Nucleotide-binding</keyword>
<keyword id="KW-0597">Phosphoprotein</keyword>
<keyword id="KW-0808">Transferase</keyword>
<comment type="function">
    <text evidence="1">Major role in the synthesis of nucleoside triphosphates other than ATP. The ATP gamma phosphate is transferred to the NDP beta phosphate via a ping-pong mechanism, using a phosphorylated active-site intermediate.</text>
</comment>
<comment type="catalytic activity">
    <reaction evidence="1">
        <text>a 2'-deoxyribonucleoside 5'-diphosphate + ATP = a 2'-deoxyribonucleoside 5'-triphosphate + ADP</text>
        <dbReference type="Rhea" id="RHEA:44640"/>
        <dbReference type="ChEBI" id="CHEBI:30616"/>
        <dbReference type="ChEBI" id="CHEBI:61560"/>
        <dbReference type="ChEBI" id="CHEBI:73316"/>
        <dbReference type="ChEBI" id="CHEBI:456216"/>
        <dbReference type="EC" id="2.7.4.6"/>
    </reaction>
</comment>
<comment type="catalytic activity">
    <reaction evidence="1">
        <text>a ribonucleoside 5'-diphosphate + ATP = a ribonucleoside 5'-triphosphate + ADP</text>
        <dbReference type="Rhea" id="RHEA:18113"/>
        <dbReference type="ChEBI" id="CHEBI:30616"/>
        <dbReference type="ChEBI" id="CHEBI:57930"/>
        <dbReference type="ChEBI" id="CHEBI:61557"/>
        <dbReference type="ChEBI" id="CHEBI:456216"/>
        <dbReference type="EC" id="2.7.4.6"/>
    </reaction>
</comment>
<comment type="cofactor">
    <cofactor evidence="1">
        <name>Mg(2+)</name>
        <dbReference type="ChEBI" id="CHEBI:18420"/>
    </cofactor>
</comment>
<comment type="subunit">
    <text evidence="1">Homotetramer.</text>
</comment>
<comment type="subcellular location">
    <subcellularLocation>
        <location evidence="1">Cytoplasm</location>
    </subcellularLocation>
</comment>
<comment type="similarity">
    <text evidence="1">Belongs to the NDK family.</text>
</comment>
<accession>A4WD96</accession>
<dbReference type="EC" id="2.7.4.6" evidence="1"/>
<dbReference type="EMBL" id="CP000653">
    <property type="protein sequence ID" value="ABP61676.1"/>
    <property type="molecule type" value="Genomic_DNA"/>
</dbReference>
<dbReference type="RefSeq" id="WP_015960008.1">
    <property type="nucleotide sequence ID" value="NC_009436.1"/>
</dbReference>
<dbReference type="SMR" id="A4WD96"/>
<dbReference type="STRING" id="399742.Ent638_3012"/>
<dbReference type="KEGG" id="ent:Ent638_3012"/>
<dbReference type="eggNOG" id="COG0105">
    <property type="taxonomic scope" value="Bacteria"/>
</dbReference>
<dbReference type="HOGENOM" id="CLU_060216_8_1_6"/>
<dbReference type="OrthoDB" id="9801161at2"/>
<dbReference type="Proteomes" id="UP000000230">
    <property type="component" value="Chromosome"/>
</dbReference>
<dbReference type="GO" id="GO:0005737">
    <property type="term" value="C:cytoplasm"/>
    <property type="evidence" value="ECO:0007669"/>
    <property type="project" value="UniProtKB-SubCell"/>
</dbReference>
<dbReference type="GO" id="GO:0005524">
    <property type="term" value="F:ATP binding"/>
    <property type="evidence" value="ECO:0007669"/>
    <property type="project" value="UniProtKB-UniRule"/>
</dbReference>
<dbReference type="GO" id="GO:0046872">
    <property type="term" value="F:metal ion binding"/>
    <property type="evidence" value="ECO:0007669"/>
    <property type="project" value="UniProtKB-KW"/>
</dbReference>
<dbReference type="GO" id="GO:0004550">
    <property type="term" value="F:nucleoside diphosphate kinase activity"/>
    <property type="evidence" value="ECO:0007669"/>
    <property type="project" value="UniProtKB-UniRule"/>
</dbReference>
<dbReference type="GO" id="GO:0006241">
    <property type="term" value="P:CTP biosynthetic process"/>
    <property type="evidence" value="ECO:0007669"/>
    <property type="project" value="UniProtKB-UniRule"/>
</dbReference>
<dbReference type="GO" id="GO:0006183">
    <property type="term" value="P:GTP biosynthetic process"/>
    <property type="evidence" value="ECO:0007669"/>
    <property type="project" value="UniProtKB-UniRule"/>
</dbReference>
<dbReference type="GO" id="GO:0006228">
    <property type="term" value="P:UTP biosynthetic process"/>
    <property type="evidence" value="ECO:0007669"/>
    <property type="project" value="UniProtKB-UniRule"/>
</dbReference>
<dbReference type="CDD" id="cd04413">
    <property type="entry name" value="NDPk_I"/>
    <property type="match status" value="1"/>
</dbReference>
<dbReference type="FunFam" id="3.30.70.141:FF:000001">
    <property type="entry name" value="Nucleoside diphosphate kinase"/>
    <property type="match status" value="1"/>
</dbReference>
<dbReference type="Gene3D" id="3.30.70.141">
    <property type="entry name" value="Nucleoside diphosphate kinase-like domain"/>
    <property type="match status" value="1"/>
</dbReference>
<dbReference type="HAMAP" id="MF_00451">
    <property type="entry name" value="NDP_kinase"/>
    <property type="match status" value="1"/>
</dbReference>
<dbReference type="InterPro" id="IPR034907">
    <property type="entry name" value="NDK-like_dom"/>
</dbReference>
<dbReference type="InterPro" id="IPR036850">
    <property type="entry name" value="NDK-like_dom_sf"/>
</dbReference>
<dbReference type="InterPro" id="IPR001564">
    <property type="entry name" value="Nucleoside_diP_kinase"/>
</dbReference>
<dbReference type="InterPro" id="IPR023005">
    <property type="entry name" value="Nucleoside_diP_kinase_AS"/>
</dbReference>
<dbReference type="NCBIfam" id="NF001908">
    <property type="entry name" value="PRK00668.1"/>
    <property type="match status" value="1"/>
</dbReference>
<dbReference type="PANTHER" id="PTHR46161">
    <property type="entry name" value="NUCLEOSIDE DIPHOSPHATE KINASE"/>
    <property type="match status" value="1"/>
</dbReference>
<dbReference type="PANTHER" id="PTHR46161:SF3">
    <property type="entry name" value="NUCLEOSIDE DIPHOSPHATE KINASE DDB_G0292928-RELATED"/>
    <property type="match status" value="1"/>
</dbReference>
<dbReference type="Pfam" id="PF00334">
    <property type="entry name" value="NDK"/>
    <property type="match status" value="1"/>
</dbReference>
<dbReference type="PRINTS" id="PR01243">
    <property type="entry name" value="NUCDPKINASE"/>
</dbReference>
<dbReference type="SMART" id="SM00562">
    <property type="entry name" value="NDK"/>
    <property type="match status" value="1"/>
</dbReference>
<dbReference type="SUPFAM" id="SSF54919">
    <property type="entry name" value="Nucleoside diphosphate kinase, NDK"/>
    <property type="match status" value="1"/>
</dbReference>
<dbReference type="PROSITE" id="PS00469">
    <property type="entry name" value="NDPK"/>
    <property type="match status" value="1"/>
</dbReference>
<dbReference type="PROSITE" id="PS51374">
    <property type="entry name" value="NDPK_LIKE"/>
    <property type="match status" value="1"/>
</dbReference>
<proteinExistence type="inferred from homology"/>
<protein>
    <recommendedName>
        <fullName evidence="1">Nucleoside diphosphate kinase</fullName>
        <shortName evidence="1">NDK</shortName>
        <shortName evidence="1">NDP kinase</shortName>
        <ecNumber evidence="1">2.7.4.6</ecNumber>
    </recommendedName>
    <alternativeName>
        <fullName evidence="1">Nucleoside-2-P kinase</fullName>
    </alternativeName>
</protein>
<gene>
    <name evidence="1" type="primary">ndk</name>
    <name type="ordered locus">Ent638_3012</name>
</gene>
<evidence type="ECO:0000255" key="1">
    <source>
        <dbReference type="HAMAP-Rule" id="MF_00451"/>
    </source>
</evidence>
<name>NDK_ENT38</name>